<feature type="signal peptide" evidence="1">
    <location>
        <begin position="1"/>
        <end position="19"/>
    </location>
</feature>
<feature type="chain" id="PRO_0000018021" description="17 kDa surface antigen">
    <location>
        <begin position="20"/>
        <end position="159"/>
    </location>
</feature>
<feature type="lipid moiety-binding region" description="N-palmitoyl cysteine" evidence="2">
    <location>
        <position position="20"/>
    </location>
</feature>
<feature type="lipid moiety-binding region" description="S-diacylglycerol cysteine" evidence="2">
    <location>
        <position position="20"/>
    </location>
</feature>
<gene>
    <name type="primary">omp</name>
    <name type="ordered locus">RC1287</name>
</gene>
<protein>
    <recommendedName>
        <fullName>17 kDa surface antigen</fullName>
    </recommendedName>
</protein>
<proteinExistence type="inferred from homology"/>
<dbReference type="EMBL" id="M28480">
    <property type="protein sequence ID" value="AAA26376.1"/>
    <property type="molecule type" value="Genomic_DNA"/>
</dbReference>
<dbReference type="EMBL" id="AE006914">
    <property type="protein sequence ID" value="AAL03825.1"/>
    <property type="molecule type" value="Genomic_DNA"/>
</dbReference>
<dbReference type="PIR" id="A33971">
    <property type="entry name" value="A33971"/>
</dbReference>
<dbReference type="PIR" id="G97860">
    <property type="entry name" value="G97860"/>
</dbReference>
<dbReference type="RefSeq" id="WP_004997204.1">
    <property type="nucleotide sequence ID" value="NC_003103.1"/>
</dbReference>
<dbReference type="KEGG" id="rco:RC1287"/>
<dbReference type="HOGENOM" id="CLU_118535_0_0_5"/>
<dbReference type="Proteomes" id="UP000000816">
    <property type="component" value="Chromosome"/>
</dbReference>
<dbReference type="GO" id="GO:0009279">
    <property type="term" value="C:cell outer membrane"/>
    <property type="evidence" value="ECO:0007669"/>
    <property type="project" value="UniProtKB-SubCell"/>
</dbReference>
<dbReference type="InterPro" id="IPR032635">
    <property type="entry name" value="Anti_2"/>
</dbReference>
<dbReference type="InterPro" id="IPR008816">
    <property type="entry name" value="Gly_zipper_2TM_dom"/>
</dbReference>
<dbReference type="InterPro" id="IPR016364">
    <property type="entry name" value="Surface_antigen_Rickettsia"/>
</dbReference>
<dbReference type="Pfam" id="PF16998">
    <property type="entry name" value="17kDa_Anti_2"/>
    <property type="match status" value="1"/>
</dbReference>
<dbReference type="Pfam" id="PF05433">
    <property type="entry name" value="Rick_17kDa_Anti"/>
    <property type="match status" value="1"/>
</dbReference>
<dbReference type="PIRSF" id="PIRSF002721">
    <property type="entry name" value="Surface_antigen_Rickettsia"/>
    <property type="match status" value="1"/>
</dbReference>
<dbReference type="PROSITE" id="PS51257">
    <property type="entry name" value="PROKAR_LIPOPROTEIN"/>
    <property type="match status" value="1"/>
</dbReference>
<keyword id="KW-0998">Cell outer membrane</keyword>
<keyword id="KW-0449">Lipoprotein</keyword>
<keyword id="KW-0472">Membrane</keyword>
<keyword id="KW-0564">Palmitate</keyword>
<keyword id="KW-0732">Signal</keyword>
<reference key="1">
    <citation type="journal article" date="1989" name="J. Bacteriol.">
        <title>Comparative sequence analysis of a genus-common rickettsial antigen gene.</title>
        <authorList>
            <person name="Anderson B.E."/>
            <person name="Tzianabos T."/>
        </authorList>
    </citation>
    <scope>NUCLEOTIDE SEQUENCE [GENOMIC DNA]</scope>
</reference>
<reference key="2">
    <citation type="journal article" date="2001" name="Science">
        <title>Mechanisms of evolution in Rickettsia conorii and R. prowazekii.</title>
        <authorList>
            <person name="Ogata H."/>
            <person name="Audic S."/>
            <person name="Renesto-Audiffren P."/>
            <person name="Fournier P.-E."/>
            <person name="Barbe V."/>
            <person name="Samson D."/>
            <person name="Roux V."/>
            <person name="Cossart P."/>
            <person name="Weissenbach J."/>
            <person name="Claverie J.-M."/>
            <person name="Raoult D."/>
        </authorList>
    </citation>
    <scope>NUCLEOTIDE SEQUENCE [LARGE SCALE GENOMIC DNA]</scope>
    <source>
        <strain>ATCC VR-613 / Malish 7</strain>
    </source>
</reference>
<accession>P0A3N4</accession>
<accession>P05372</accession>
<sequence length="159" mass="16581">MKLLSKIMIIALATSMLQACNGPGGMNKQGTGTLLGGAGGALLGSQFGKGKGQLVGVGVGALLGAVLGGQIGAGMDEQDRRLAELTSQRALETAPSGSNVEWRNPDNGNYGYVTPNKTYRNSTGQYCREYTQTVVIGGKQQKAYGNACRQPDGQWQVVN</sequence>
<comment type="subcellular location">
    <subcellularLocation>
        <location evidence="2">Cell outer membrane</location>
        <topology evidence="2">Lipid-anchor</topology>
    </subcellularLocation>
</comment>
<comment type="similarity">
    <text evidence="2">Belongs to the rickettsiale 17 kDa surface antigen family.</text>
</comment>
<name>17KD_RICCN</name>
<organism>
    <name type="scientific">Rickettsia conorii (strain ATCC VR-613 / Malish 7)</name>
    <dbReference type="NCBI Taxonomy" id="272944"/>
    <lineage>
        <taxon>Bacteria</taxon>
        <taxon>Pseudomonadati</taxon>
        <taxon>Pseudomonadota</taxon>
        <taxon>Alphaproteobacteria</taxon>
        <taxon>Rickettsiales</taxon>
        <taxon>Rickettsiaceae</taxon>
        <taxon>Rickettsieae</taxon>
        <taxon>Rickettsia</taxon>
        <taxon>spotted fever group</taxon>
    </lineage>
</organism>
<evidence type="ECO:0000255" key="1">
    <source>
        <dbReference type="PROSITE-ProRule" id="PRU00303"/>
    </source>
</evidence>
<evidence type="ECO:0000305" key="2"/>